<reference key="1">
    <citation type="journal article" date="2004" name="Environ. Microbiol.">
        <title>The genome of Desulfotalea psychrophila, a sulfate-reducing bacterium from permanently cold Arctic sediments.</title>
        <authorList>
            <person name="Rabus R."/>
            <person name="Ruepp A."/>
            <person name="Frickey T."/>
            <person name="Rattei T."/>
            <person name="Fartmann B."/>
            <person name="Stark M."/>
            <person name="Bauer M."/>
            <person name="Zibat A."/>
            <person name="Lombardot T."/>
            <person name="Becker I."/>
            <person name="Amann J."/>
            <person name="Gellner K."/>
            <person name="Teeling H."/>
            <person name="Leuschner W.D."/>
            <person name="Gloeckner F.-O."/>
            <person name="Lupas A.N."/>
            <person name="Amann R."/>
            <person name="Klenk H.-P."/>
        </authorList>
    </citation>
    <scope>NUCLEOTIDE SEQUENCE [LARGE SCALE GENOMIC DNA]</scope>
    <source>
        <strain>DSM 12343 / LSv54</strain>
    </source>
</reference>
<feature type="chain" id="PRO_0000137766" description="Argininosuccinate lyase">
    <location>
        <begin position="1"/>
        <end position="464"/>
    </location>
</feature>
<evidence type="ECO:0000255" key="1">
    <source>
        <dbReference type="HAMAP-Rule" id="MF_00006"/>
    </source>
</evidence>
<comment type="catalytic activity">
    <reaction evidence="1">
        <text>2-(N(omega)-L-arginino)succinate = fumarate + L-arginine</text>
        <dbReference type="Rhea" id="RHEA:24020"/>
        <dbReference type="ChEBI" id="CHEBI:29806"/>
        <dbReference type="ChEBI" id="CHEBI:32682"/>
        <dbReference type="ChEBI" id="CHEBI:57472"/>
        <dbReference type="EC" id="4.3.2.1"/>
    </reaction>
</comment>
<comment type="pathway">
    <text evidence="1">Amino-acid biosynthesis; L-arginine biosynthesis; L-arginine from L-ornithine and carbamoyl phosphate: step 3/3.</text>
</comment>
<comment type="subcellular location">
    <subcellularLocation>
        <location evidence="1">Cytoplasm</location>
    </subcellularLocation>
</comment>
<comment type="similarity">
    <text evidence="1">Belongs to the lyase 1 family. Argininosuccinate lyase subfamily.</text>
</comment>
<keyword id="KW-0028">Amino-acid biosynthesis</keyword>
<keyword id="KW-0055">Arginine biosynthesis</keyword>
<keyword id="KW-0963">Cytoplasm</keyword>
<keyword id="KW-0456">Lyase</keyword>
<keyword id="KW-1185">Reference proteome</keyword>
<proteinExistence type="inferred from homology"/>
<protein>
    <recommendedName>
        <fullName evidence="1">Argininosuccinate lyase</fullName>
        <shortName evidence="1">ASAL</shortName>
        <ecNumber evidence="1">4.3.2.1</ecNumber>
    </recommendedName>
    <alternativeName>
        <fullName evidence="1">Arginosuccinase</fullName>
    </alternativeName>
</protein>
<organism>
    <name type="scientific">Desulfotalea psychrophila (strain LSv54 / DSM 12343)</name>
    <dbReference type="NCBI Taxonomy" id="177439"/>
    <lineage>
        <taxon>Bacteria</taxon>
        <taxon>Pseudomonadati</taxon>
        <taxon>Thermodesulfobacteriota</taxon>
        <taxon>Desulfobulbia</taxon>
        <taxon>Desulfobulbales</taxon>
        <taxon>Desulfocapsaceae</taxon>
        <taxon>Desulfotalea</taxon>
    </lineage>
</organism>
<gene>
    <name evidence="1" type="primary">argH</name>
    <name type="ordered locus">DP0435</name>
</gene>
<name>ARLY_DESPS</name>
<dbReference type="EC" id="4.3.2.1" evidence="1"/>
<dbReference type="EMBL" id="CR522870">
    <property type="protein sequence ID" value="CAG35164.1"/>
    <property type="molecule type" value="Genomic_DNA"/>
</dbReference>
<dbReference type="RefSeq" id="WP_011187680.1">
    <property type="nucleotide sequence ID" value="NC_006138.1"/>
</dbReference>
<dbReference type="SMR" id="Q6AR60"/>
<dbReference type="STRING" id="177439.DP0435"/>
<dbReference type="KEGG" id="dps:DP0435"/>
<dbReference type="eggNOG" id="COG0165">
    <property type="taxonomic scope" value="Bacteria"/>
</dbReference>
<dbReference type="HOGENOM" id="CLU_027272_2_3_7"/>
<dbReference type="OrthoDB" id="9769623at2"/>
<dbReference type="UniPathway" id="UPA00068">
    <property type="reaction ID" value="UER00114"/>
</dbReference>
<dbReference type="Proteomes" id="UP000000602">
    <property type="component" value="Chromosome"/>
</dbReference>
<dbReference type="GO" id="GO:0005829">
    <property type="term" value="C:cytosol"/>
    <property type="evidence" value="ECO:0007669"/>
    <property type="project" value="TreeGrafter"/>
</dbReference>
<dbReference type="GO" id="GO:0004056">
    <property type="term" value="F:argininosuccinate lyase activity"/>
    <property type="evidence" value="ECO:0007669"/>
    <property type="project" value="UniProtKB-UniRule"/>
</dbReference>
<dbReference type="GO" id="GO:0042450">
    <property type="term" value="P:arginine biosynthetic process via ornithine"/>
    <property type="evidence" value="ECO:0007669"/>
    <property type="project" value="InterPro"/>
</dbReference>
<dbReference type="GO" id="GO:0006526">
    <property type="term" value="P:L-arginine biosynthetic process"/>
    <property type="evidence" value="ECO:0007669"/>
    <property type="project" value="UniProtKB-UniRule"/>
</dbReference>
<dbReference type="CDD" id="cd01359">
    <property type="entry name" value="Argininosuccinate_lyase"/>
    <property type="match status" value="1"/>
</dbReference>
<dbReference type="FunFam" id="1.10.275.10:FF:000002">
    <property type="entry name" value="Argininosuccinate lyase"/>
    <property type="match status" value="1"/>
</dbReference>
<dbReference type="FunFam" id="1.10.40.30:FF:000001">
    <property type="entry name" value="Argininosuccinate lyase"/>
    <property type="match status" value="1"/>
</dbReference>
<dbReference type="FunFam" id="1.20.200.10:FF:000015">
    <property type="entry name" value="argininosuccinate lyase isoform X2"/>
    <property type="match status" value="1"/>
</dbReference>
<dbReference type="Gene3D" id="1.10.40.30">
    <property type="entry name" value="Fumarase/aspartase (C-terminal domain)"/>
    <property type="match status" value="1"/>
</dbReference>
<dbReference type="Gene3D" id="1.20.200.10">
    <property type="entry name" value="Fumarase/aspartase (Central domain)"/>
    <property type="match status" value="1"/>
</dbReference>
<dbReference type="Gene3D" id="1.10.275.10">
    <property type="entry name" value="Fumarase/aspartase (N-terminal domain)"/>
    <property type="match status" value="1"/>
</dbReference>
<dbReference type="HAMAP" id="MF_00006">
    <property type="entry name" value="Arg_succ_lyase"/>
    <property type="match status" value="1"/>
</dbReference>
<dbReference type="InterPro" id="IPR029419">
    <property type="entry name" value="Arg_succ_lyase_C"/>
</dbReference>
<dbReference type="InterPro" id="IPR009049">
    <property type="entry name" value="Argininosuccinate_lyase"/>
</dbReference>
<dbReference type="InterPro" id="IPR024083">
    <property type="entry name" value="Fumarase/histidase_N"/>
</dbReference>
<dbReference type="InterPro" id="IPR020557">
    <property type="entry name" value="Fumarate_lyase_CS"/>
</dbReference>
<dbReference type="InterPro" id="IPR000362">
    <property type="entry name" value="Fumarate_lyase_fam"/>
</dbReference>
<dbReference type="InterPro" id="IPR022761">
    <property type="entry name" value="Fumarate_lyase_N"/>
</dbReference>
<dbReference type="InterPro" id="IPR008948">
    <property type="entry name" value="L-Aspartase-like"/>
</dbReference>
<dbReference type="NCBIfam" id="TIGR00838">
    <property type="entry name" value="argH"/>
    <property type="match status" value="1"/>
</dbReference>
<dbReference type="PANTHER" id="PTHR43814">
    <property type="entry name" value="ARGININOSUCCINATE LYASE"/>
    <property type="match status" value="1"/>
</dbReference>
<dbReference type="PANTHER" id="PTHR43814:SF1">
    <property type="entry name" value="ARGININOSUCCINATE LYASE"/>
    <property type="match status" value="1"/>
</dbReference>
<dbReference type="Pfam" id="PF14698">
    <property type="entry name" value="ASL_C2"/>
    <property type="match status" value="1"/>
</dbReference>
<dbReference type="Pfam" id="PF00206">
    <property type="entry name" value="Lyase_1"/>
    <property type="match status" value="1"/>
</dbReference>
<dbReference type="PRINTS" id="PR00145">
    <property type="entry name" value="ARGSUCLYASE"/>
</dbReference>
<dbReference type="PRINTS" id="PR00149">
    <property type="entry name" value="FUMRATELYASE"/>
</dbReference>
<dbReference type="SUPFAM" id="SSF48557">
    <property type="entry name" value="L-aspartase-like"/>
    <property type="match status" value="1"/>
</dbReference>
<dbReference type="PROSITE" id="PS00163">
    <property type="entry name" value="FUMARATE_LYASES"/>
    <property type="match status" value="1"/>
</dbReference>
<accession>Q6AR60</accession>
<sequence>MTEQKSKKLWGGRFSEAMAASVEKFSESISYDVRLYKYDIAGSKAHATMLSSQGIISPEELEQIIAGLSSIEADIEAGVFEFKTEYEDVHMNIEQALVDRIGAAGSRLHAARSRNDQIALDFKMYLRDQCDHLVELLDGACRAFTVVGRKYLGDIMPGYTHTQRAQPVLITHHMLAYYEMFRRDRDRILDCRKRLNLSPLGCAAMAGTGLPINREQVAKALGFAGVTANSMDTSADRDYAIELTSCLTMIQLHLSRLAEELVTWSTSEYKFVDISDSFCTGSSIMPQKKNPDIAELIRGKSGRVVGSLISLITMMKGLPLTYNRDQQEDKEPVFDAIDTVSASLSITAEMMAHMKFNTARCAEATETGFITATDLADYLVMKDVPFRQAHHIVGSAVAACIAKGCELPDLTLTEMQEFSPVIESDVFAVLTAEGSVNSRVSTGGTGLVRVTEALTLAEKCVGIA</sequence>